<evidence type="ECO:0000255" key="1">
    <source>
        <dbReference type="HAMAP-Rule" id="MF_00407"/>
    </source>
</evidence>
<feature type="chain" id="PRO_1000205954" description="Probable DNA ligase">
    <location>
        <begin position="1"/>
        <end position="512"/>
    </location>
</feature>
<feature type="active site" description="N6-AMP-lysine intermediate" evidence="1">
    <location>
        <position position="219"/>
    </location>
</feature>
<feature type="binding site" evidence="1">
    <location>
        <position position="217"/>
    </location>
    <ligand>
        <name>ATP</name>
        <dbReference type="ChEBI" id="CHEBI:30616"/>
    </ligand>
</feature>
<feature type="binding site" evidence="1">
    <location>
        <position position="224"/>
    </location>
    <ligand>
        <name>ATP</name>
        <dbReference type="ChEBI" id="CHEBI:30616"/>
    </ligand>
</feature>
<feature type="binding site" evidence="1">
    <location>
        <position position="239"/>
    </location>
    <ligand>
        <name>ATP</name>
        <dbReference type="ChEBI" id="CHEBI:30616"/>
    </ligand>
</feature>
<feature type="binding site" evidence="1">
    <location>
        <position position="268"/>
    </location>
    <ligand>
        <name>ATP</name>
        <dbReference type="ChEBI" id="CHEBI:30616"/>
    </ligand>
</feature>
<feature type="binding site" evidence="1">
    <location>
        <position position="306"/>
    </location>
    <ligand>
        <name>ATP</name>
        <dbReference type="ChEBI" id="CHEBI:30616"/>
    </ligand>
</feature>
<feature type="binding site" evidence="1">
    <location>
        <position position="377"/>
    </location>
    <ligand>
        <name>ATP</name>
        <dbReference type="ChEBI" id="CHEBI:30616"/>
    </ligand>
</feature>
<feature type="binding site" evidence="1">
    <location>
        <position position="383"/>
    </location>
    <ligand>
        <name>ATP</name>
        <dbReference type="ChEBI" id="CHEBI:30616"/>
    </ligand>
</feature>
<keyword id="KW-0067">ATP-binding</keyword>
<keyword id="KW-0131">Cell cycle</keyword>
<keyword id="KW-0132">Cell division</keyword>
<keyword id="KW-0227">DNA damage</keyword>
<keyword id="KW-0233">DNA recombination</keyword>
<keyword id="KW-0234">DNA repair</keyword>
<keyword id="KW-0235">DNA replication</keyword>
<keyword id="KW-0436">Ligase</keyword>
<keyword id="KW-0460">Magnesium</keyword>
<keyword id="KW-0479">Metal-binding</keyword>
<keyword id="KW-0547">Nucleotide-binding</keyword>
<keyword id="KW-1185">Reference proteome</keyword>
<reference key="1">
    <citation type="journal article" date="2009" name="Stand. Genomic Sci.">
        <title>Complete genome sequence of Beutenbergia cavernae type strain (HKI 0122).</title>
        <authorList>
            <person name="Land M."/>
            <person name="Pukall R."/>
            <person name="Abt B."/>
            <person name="Goker M."/>
            <person name="Rohde M."/>
            <person name="Glavina Del Rio T."/>
            <person name="Tice H."/>
            <person name="Copeland A."/>
            <person name="Cheng J.F."/>
            <person name="Lucas S."/>
            <person name="Chen F."/>
            <person name="Nolan M."/>
            <person name="Bruce D."/>
            <person name="Goodwin L."/>
            <person name="Pitluck S."/>
            <person name="Ivanova N."/>
            <person name="Mavromatis K."/>
            <person name="Ovchinnikova G."/>
            <person name="Pati A."/>
            <person name="Chen A."/>
            <person name="Palaniappan K."/>
            <person name="Hauser L."/>
            <person name="Chang Y.J."/>
            <person name="Jefferies C.C."/>
            <person name="Saunders E."/>
            <person name="Brettin T."/>
            <person name="Detter J.C."/>
            <person name="Han C."/>
            <person name="Chain P."/>
            <person name="Bristow J."/>
            <person name="Eisen J.A."/>
            <person name="Markowitz V."/>
            <person name="Hugenholtz P."/>
            <person name="Kyrpides N.C."/>
            <person name="Klenk H.P."/>
            <person name="Lapidus A."/>
        </authorList>
    </citation>
    <scope>NUCLEOTIDE SEQUENCE [LARGE SCALE GENOMIC DNA]</scope>
    <source>
        <strain>ATCC BAA-8 / DSM 12333 / CCUG 43141 / JCM 11478 / NBRC 16432 / NCIMB 13614 / HKI 0122</strain>
    </source>
</reference>
<gene>
    <name evidence="1" type="primary">lig</name>
    <name type="ordered locus">Bcav_0272</name>
</gene>
<dbReference type="EC" id="6.5.1.1" evidence="1"/>
<dbReference type="EMBL" id="CP001618">
    <property type="protein sequence ID" value="ACQ78537.1"/>
    <property type="molecule type" value="Genomic_DNA"/>
</dbReference>
<dbReference type="RefSeq" id="WP_012725317.1">
    <property type="nucleotide sequence ID" value="NC_012669.1"/>
</dbReference>
<dbReference type="SMR" id="C5BW79"/>
<dbReference type="STRING" id="471853.Bcav_0272"/>
<dbReference type="KEGG" id="bcv:Bcav_0272"/>
<dbReference type="eggNOG" id="COG1793">
    <property type="taxonomic scope" value="Bacteria"/>
</dbReference>
<dbReference type="HOGENOM" id="CLU_005138_6_1_11"/>
<dbReference type="OrthoDB" id="3733803at2"/>
<dbReference type="Proteomes" id="UP000007962">
    <property type="component" value="Chromosome"/>
</dbReference>
<dbReference type="GO" id="GO:0005524">
    <property type="term" value="F:ATP binding"/>
    <property type="evidence" value="ECO:0007669"/>
    <property type="project" value="UniProtKB-UniRule"/>
</dbReference>
<dbReference type="GO" id="GO:0003677">
    <property type="term" value="F:DNA binding"/>
    <property type="evidence" value="ECO:0007669"/>
    <property type="project" value="InterPro"/>
</dbReference>
<dbReference type="GO" id="GO:0003910">
    <property type="term" value="F:DNA ligase (ATP) activity"/>
    <property type="evidence" value="ECO:0007669"/>
    <property type="project" value="UniProtKB-UniRule"/>
</dbReference>
<dbReference type="GO" id="GO:0046872">
    <property type="term" value="F:metal ion binding"/>
    <property type="evidence" value="ECO:0007669"/>
    <property type="project" value="UniProtKB-KW"/>
</dbReference>
<dbReference type="GO" id="GO:0051301">
    <property type="term" value="P:cell division"/>
    <property type="evidence" value="ECO:0007669"/>
    <property type="project" value="UniProtKB-KW"/>
</dbReference>
<dbReference type="GO" id="GO:0071897">
    <property type="term" value="P:DNA biosynthetic process"/>
    <property type="evidence" value="ECO:0007669"/>
    <property type="project" value="InterPro"/>
</dbReference>
<dbReference type="GO" id="GO:0006310">
    <property type="term" value="P:DNA recombination"/>
    <property type="evidence" value="ECO:0007669"/>
    <property type="project" value="UniProtKB-UniRule"/>
</dbReference>
<dbReference type="GO" id="GO:0006281">
    <property type="term" value="P:DNA repair"/>
    <property type="evidence" value="ECO:0007669"/>
    <property type="project" value="UniProtKB-UniRule"/>
</dbReference>
<dbReference type="GO" id="GO:0006260">
    <property type="term" value="P:DNA replication"/>
    <property type="evidence" value="ECO:0007669"/>
    <property type="project" value="UniProtKB-UniRule"/>
</dbReference>
<dbReference type="CDD" id="cd07901">
    <property type="entry name" value="Adenylation_DNA_ligase_Arch_LigB"/>
    <property type="match status" value="1"/>
</dbReference>
<dbReference type="CDD" id="cd07972">
    <property type="entry name" value="OBF_DNA_ligase_Arch_LigB"/>
    <property type="match status" value="1"/>
</dbReference>
<dbReference type="FunFam" id="2.40.50.140:FF:000163">
    <property type="entry name" value="Probable DNA ligase"/>
    <property type="match status" value="1"/>
</dbReference>
<dbReference type="Gene3D" id="1.10.3260.10">
    <property type="entry name" value="DNA ligase, ATP-dependent, N-terminal domain"/>
    <property type="match status" value="1"/>
</dbReference>
<dbReference type="Gene3D" id="3.30.470.30">
    <property type="entry name" value="DNA ligase/mRNA capping enzyme"/>
    <property type="match status" value="1"/>
</dbReference>
<dbReference type="Gene3D" id="2.40.50.140">
    <property type="entry name" value="Nucleic acid-binding proteins"/>
    <property type="match status" value="1"/>
</dbReference>
<dbReference type="HAMAP" id="MF_00407">
    <property type="entry name" value="DNA_ligase"/>
    <property type="match status" value="1"/>
</dbReference>
<dbReference type="InterPro" id="IPR050191">
    <property type="entry name" value="ATP-dep_DNA_ligase"/>
</dbReference>
<dbReference type="InterPro" id="IPR022865">
    <property type="entry name" value="DNA_ligae_ATP-dep_bac/arc"/>
</dbReference>
<dbReference type="InterPro" id="IPR000977">
    <property type="entry name" value="DNA_ligase_ATP-dep"/>
</dbReference>
<dbReference type="InterPro" id="IPR012309">
    <property type="entry name" value="DNA_ligase_ATP-dep_C"/>
</dbReference>
<dbReference type="InterPro" id="IPR012310">
    <property type="entry name" value="DNA_ligase_ATP-dep_cent"/>
</dbReference>
<dbReference type="InterPro" id="IPR016059">
    <property type="entry name" value="DNA_ligase_ATP-dep_CS"/>
</dbReference>
<dbReference type="InterPro" id="IPR036599">
    <property type="entry name" value="DNA_ligase_N_sf"/>
</dbReference>
<dbReference type="InterPro" id="IPR012340">
    <property type="entry name" value="NA-bd_OB-fold"/>
</dbReference>
<dbReference type="NCBIfam" id="TIGR00574">
    <property type="entry name" value="dnl1"/>
    <property type="match status" value="1"/>
</dbReference>
<dbReference type="NCBIfam" id="NF002868">
    <property type="entry name" value="PRK03180.1"/>
    <property type="match status" value="1"/>
</dbReference>
<dbReference type="PANTHER" id="PTHR45674">
    <property type="entry name" value="DNA LIGASE 1/3 FAMILY MEMBER"/>
    <property type="match status" value="1"/>
</dbReference>
<dbReference type="PANTHER" id="PTHR45674:SF13">
    <property type="entry name" value="DNA LIGASE-RELATED"/>
    <property type="match status" value="1"/>
</dbReference>
<dbReference type="Pfam" id="PF04679">
    <property type="entry name" value="DNA_ligase_A_C"/>
    <property type="match status" value="1"/>
</dbReference>
<dbReference type="Pfam" id="PF01068">
    <property type="entry name" value="DNA_ligase_A_M"/>
    <property type="match status" value="1"/>
</dbReference>
<dbReference type="SUPFAM" id="SSF117018">
    <property type="entry name" value="ATP-dependent DNA ligase DNA-binding domain"/>
    <property type="match status" value="1"/>
</dbReference>
<dbReference type="SUPFAM" id="SSF56091">
    <property type="entry name" value="DNA ligase/mRNA capping enzyme, catalytic domain"/>
    <property type="match status" value="1"/>
</dbReference>
<dbReference type="SUPFAM" id="SSF50249">
    <property type="entry name" value="Nucleic acid-binding proteins"/>
    <property type="match status" value="1"/>
</dbReference>
<dbReference type="PROSITE" id="PS00697">
    <property type="entry name" value="DNA_LIGASE_A1"/>
    <property type="match status" value="1"/>
</dbReference>
<dbReference type="PROSITE" id="PS00333">
    <property type="entry name" value="DNA_LIGASE_A2"/>
    <property type="match status" value="1"/>
</dbReference>
<dbReference type="PROSITE" id="PS50160">
    <property type="entry name" value="DNA_LIGASE_A3"/>
    <property type="match status" value="1"/>
</dbReference>
<protein>
    <recommendedName>
        <fullName evidence="1">Probable DNA ligase</fullName>
        <ecNumber evidence="1">6.5.1.1</ecNumber>
    </recommendedName>
    <alternativeName>
        <fullName evidence="1">Polydeoxyribonucleotide synthase [ATP]</fullName>
    </alternativeName>
</protein>
<accession>C5BW79</accession>
<proteinExistence type="inferred from homology"/>
<name>DNLI_BEUC1</name>
<organism>
    <name type="scientific">Beutenbergia cavernae (strain ATCC BAA-8 / DSM 12333 / CCUG 43141 / JCM 11478 / NBRC 16432 / NCIMB 13614 / HKI 0122)</name>
    <dbReference type="NCBI Taxonomy" id="471853"/>
    <lineage>
        <taxon>Bacteria</taxon>
        <taxon>Bacillati</taxon>
        <taxon>Actinomycetota</taxon>
        <taxon>Actinomycetes</taxon>
        <taxon>Micrococcales</taxon>
        <taxon>Beutenbergiaceae</taxon>
        <taxon>Beutenbergia</taxon>
    </lineage>
</organism>
<sequence length="512" mass="53976">MLLAEVAATSDAVAATRSRLAKRAAIADLLRRAPADDVEIVVAYVAGELRQRRTGLGWRSLRDLPGPAEDPSLEVADVDATFAAMADLAGPGSATARAAAAAELFAAATEREQALLRGLVSGELRQGALDALVLDAVADAAGVPAPEVRRAAMFAGATGPVARAALAAAGPAEAVAALSGFMLTVGRAVRPMLAQSAPDVAAAFAKLPGGDVAVSVDVKLDGIRIQVHKAGDEVRVFTRSLDDITGRVPEIVEAVRALPAGALVLDGEALAVDAGGRPRPFQETASRSATRDADVAAAMTLTPFFFDCLHADGRDLVDAPLRERLEVLDAVAGPHVVTRLTTSDPAAAEEFFAAAVRDGQEGVVVKATDTPYEAGRRGAGWIKVKPRHTLDLVVLAVEWGSGRRRGWLSNIHLGARDPAGGFVMLGKTFKGMTDEMLAWQTERFLELETSRDEWAVHLRPEQVVEIAFDGLQRSTRYPGGLALRFARVLRYRDDKTAAEADTIDTVRTLAGL</sequence>
<comment type="function">
    <text evidence="1">DNA ligase that seals nicks in double-stranded DNA during DNA replication, DNA recombination and DNA repair.</text>
</comment>
<comment type="catalytic activity">
    <reaction evidence="1">
        <text>ATP + (deoxyribonucleotide)n-3'-hydroxyl + 5'-phospho-(deoxyribonucleotide)m = (deoxyribonucleotide)n+m + AMP + diphosphate.</text>
        <dbReference type="EC" id="6.5.1.1"/>
    </reaction>
</comment>
<comment type="cofactor">
    <cofactor evidence="1">
        <name>Mg(2+)</name>
        <dbReference type="ChEBI" id="CHEBI:18420"/>
    </cofactor>
</comment>
<comment type="similarity">
    <text evidence="1">Belongs to the ATP-dependent DNA ligase family.</text>
</comment>